<accession>P15663</accession>
<protein>
    <recommendedName>
        <fullName evidence="1">Nucleoprotein</fullName>
    </recommendedName>
    <alternativeName>
        <fullName evidence="1">Nucleocapsid protein</fullName>
        <shortName evidence="1">Protein N</shortName>
    </alternativeName>
</protein>
<dbReference type="EMBL" id="M30763">
    <property type="protein sequence ID" value="AAA43484.1"/>
    <property type="molecule type" value="Genomic_RNA"/>
</dbReference>
<dbReference type="SMR" id="P15663"/>
<dbReference type="GO" id="GO:0019029">
    <property type="term" value="C:helical viral capsid"/>
    <property type="evidence" value="ECO:0007669"/>
    <property type="project" value="UniProtKB-UniRule"/>
</dbReference>
<dbReference type="GO" id="GO:0043657">
    <property type="term" value="C:host cell"/>
    <property type="evidence" value="ECO:0007669"/>
    <property type="project" value="GOC"/>
</dbReference>
<dbReference type="GO" id="GO:0042025">
    <property type="term" value="C:host cell nucleus"/>
    <property type="evidence" value="ECO:0007669"/>
    <property type="project" value="UniProtKB-SubCell"/>
</dbReference>
<dbReference type="GO" id="GO:1990904">
    <property type="term" value="C:ribonucleoprotein complex"/>
    <property type="evidence" value="ECO:0007669"/>
    <property type="project" value="UniProtKB-KW"/>
</dbReference>
<dbReference type="GO" id="GO:0019013">
    <property type="term" value="C:viral nucleocapsid"/>
    <property type="evidence" value="ECO:0007669"/>
    <property type="project" value="UniProtKB-UniRule"/>
</dbReference>
<dbReference type="GO" id="GO:0003723">
    <property type="term" value="F:RNA binding"/>
    <property type="evidence" value="ECO:0007669"/>
    <property type="project" value="UniProtKB-UniRule"/>
</dbReference>
<dbReference type="GO" id="GO:0005198">
    <property type="term" value="F:structural molecule activity"/>
    <property type="evidence" value="ECO:0007669"/>
    <property type="project" value="UniProtKB-UniRule"/>
</dbReference>
<dbReference type="GO" id="GO:0046718">
    <property type="term" value="P:symbiont entry into host cell"/>
    <property type="evidence" value="ECO:0007669"/>
    <property type="project" value="UniProtKB-KW"/>
</dbReference>
<dbReference type="GO" id="GO:0075732">
    <property type="term" value="P:viral penetration into host nucleus"/>
    <property type="evidence" value="ECO:0007669"/>
    <property type="project" value="UniProtKB-UniRule"/>
</dbReference>
<dbReference type="HAMAP" id="MF_04070">
    <property type="entry name" value="INFV_NCAP"/>
    <property type="match status" value="1"/>
</dbReference>
<dbReference type="InterPro" id="IPR002141">
    <property type="entry name" value="Flu_NP"/>
</dbReference>
<dbReference type="Pfam" id="PF00506">
    <property type="entry name" value="Flu_NP"/>
    <property type="match status" value="1"/>
</dbReference>
<dbReference type="SUPFAM" id="SSF161003">
    <property type="entry name" value="flu NP-like"/>
    <property type="match status" value="1"/>
</dbReference>
<organismHost>
    <name type="scientific">Aves</name>
    <dbReference type="NCBI Taxonomy" id="8782"/>
</organismHost>
<feature type="chain" id="PRO_0000079042" description="Nucleoprotein">
    <location>
        <begin position="1"/>
        <end position="498"/>
    </location>
</feature>
<feature type="region of interest" description="Disordered" evidence="2">
    <location>
        <begin position="1"/>
        <end position="21"/>
    </location>
</feature>
<feature type="short sequence motif" description="Unconventional nuclear localization signal" evidence="1">
    <location>
        <begin position="1"/>
        <end position="18"/>
    </location>
</feature>
<feature type="short sequence motif" description="Bipartite nuclear localization signal" evidence="1">
    <location>
        <begin position="198"/>
        <end position="216"/>
    </location>
</feature>
<gene>
    <name evidence="1" type="primary">NP</name>
</gene>
<evidence type="ECO:0000255" key="1">
    <source>
        <dbReference type="HAMAP-Rule" id="MF_04070"/>
    </source>
</evidence>
<evidence type="ECO:0000256" key="2">
    <source>
        <dbReference type="SAM" id="MobiDB-lite"/>
    </source>
</evidence>
<keyword id="KW-0167">Capsid protein</keyword>
<keyword id="KW-1139">Helical capsid protein</keyword>
<keyword id="KW-1048">Host nucleus</keyword>
<keyword id="KW-0945">Host-virus interaction</keyword>
<keyword id="KW-0687">Ribonucleoprotein</keyword>
<keyword id="KW-0694">RNA-binding</keyword>
<keyword id="KW-0543">Viral nucleoprotein</keyword>
<keyword id="KW-1163">Viral penetration into host nucleus</keyword>
<keyword id="KW-0946">Virion</keyword>
<keyword id="KW-1160">Virus entry into host cell</keyword>
<proteinExistence type="inferred from homology"/>
<organism>
    <name type="scientific">Influenza A virus (strain A/Duck/Ukraine/2/1960 H11N8)</name>
    <dbReference type="NCBI Taxonomy" id="385589"/>
    <lineage>
        <taxon>Viruses</taxon>
        <taxon>Riboviria</taxon>
        <taxon>Orthornavirae</taxon>
        <taxon>Negarnaviricota</taxon>
        <taxon>Polyploviricotina</taxon>
        <taxon>Insthoviricetes</taxon>
        <taxon>Articulavirales</taxon>
        <taxon>Orthomyxoviridae</taxon>
        <taxon>Alphainfluenzavirus</taxon>
        <taxon>Alphainfluenzavirus influenzae</taxon>
        <taxon>Influenza A virus</taxon>
    </lineage>
</organism>
<reference key="1">
    <citation type="journal article" date="1990" name="J. Virol.">
        <title>Evolution of the nucleoprotein gene of influenza A virus.</title>
        <authorList>
            <person name="Gorman O.T."/>
            <person name="Bean W.J."/>
            <person name="Kawaoka Y."/>
            <person name="Webster R.G."/>
        </authorList>
    </citation>
    <scope>NUCLEOTIDE SEQUENCE [GENOMIC RNA]</scope>
</reference>
<sequence length="498" mass="56290">MASQGTKRSYEQMETGGDRQNATEIRASVGRMVSGIGRFYIQMCTELKLSDYEGRLIQNSITIERMVLSAFDERRNKYLEEHPSAGKDPKKTGGPIYRRRDGKWMRELILYDKEEIRRIWRQANNGEDATAGLTHLMIWHSNLNDATYQRTRALVRTGMDPRMCSLMQGSTLPRRSGAAGAAVKGVGTMVMELIRMIKRGINDRNFWRGENGRRTRIAYERMCNILKGKFQTAAQRAMMDQVRESRNPGNAEIEDLIFLARSALILRGSVAHKSCLPACVYGLAVASGYDFEREGYSLVGIDPFRLLQNSQVFSLIRPNENPAHKSQLVWMACHSAAFEDLRVSSFIRGTRVVPRGQLSTRGVQIASNENMETMDSSTLELRSRYWAIRTRSGGNTNQQRASAGQISVQPTFSVQRNLPFERATIMAAFTGNTEGRTSDMRTEIIRMMESARSEDVSFQGRGVFELSDEKATNPIVPSFDMSNEGSYFFGDNAEEYDN</sequence>
<comment type="function">
    <text evidence="1">Encapsidates the negative strand viral RNA, protecting it from nucleases. The encapsidated genomic RNA is termed the ribonucleoprotein (RNP) and serves as template for transcription and replication. The RNP needs to be localized in the host nucleus to start an infectious cycle, but is too large to diffuse through the nuclear pore complex. NP comprises at least 2 nuclear localization signals that are responsible for the active RNP import into the nucleus through cellular importin alpha/beta pathway. Later in the infection, nclear export of RNPs are mediated through viral proteins NEP interacting with M1 which binds nucleoproteins. It is possible that nucleoprotein binds directly host exportin-1/XPO1 and plays an active role in RNPs nuclear export. M1 interaction with RNP seems to hide nucleoprotein's nuclear localization signals. Soon after a virion infects a new cell, M1 dissociates from the RNP under acidification of the virion driven by M2 protein. Dissociation of M1 from RNP unmasks nucleoprotein's nuclear localization signals, targeting the RNP to the nucleus.</text>
</comment>
<comment type="subunit">
    <text evidence="1">Homomultimerizes to form the nucleocapsid. May bind host exportin-1/XPO1. Binds to viral genomic RNA. Protein-RNA contacts are mediated by a combination of electrostatic interactions between positively charged residues and the phosphate backbone and planar interactions between aromatic side chains and bases.</text>
</comment>
<comment type="subcellular location">
    <subcellularLocation>
        <location evidence="1">Virion</location>
    </subcellularLocation>
    <subcellularLocation>
        <location evidence="1">Host nucleus</location>
    </subcellularLocation>
</comment>
<comment type="PTM">
    <text evidence="1">Late in virus-infected cells, may be cleaved from a 56-kDa protein to a 53-kDa protein by a cellular caspase. This cleavage might be a marker for the onset of apoptosis in infected cells or have a specific function in virus host interaction.</text>
</comment>
<comment type="similarity">
    <text evidence="1">Belongs to the influenza viruses nucleoprotein family.</text>
</comment>
<name>NCAP_I60A2</name>